<accession>B5Y8I0</accession>
<gene>
    <name evidence="1" type="primary">pgk</name>
    <name type="ordered locus">COPRO5265_0729</name>
</gene>
<dbReference type="EC" id="2.7.2.3" evidence="1"/>
<dbReference type="EMBL" id="CP001145">
    <property type="protein sequence ID" value="ACI16869.1"/>
    <property type="molecule type" value="Genomic_DNA"/>
</dbReference>
<dbReference type="RefSeq" id="WP_012543521.1">
    <property type="nucleotide sequence ID" value="NC_011295.1"/>
</dbReference>
<dbReference type="SMR" id="B5Y8I0"/>
<dbReference type="STRING" id="309798.COPRO5265_0729"/>
<dbReference type="KEGG" id="cpo:COPRO5265_0729"/>
<dbReference type="eggNOG" id="COG0126">
    <property type="taxonomic scope" value="Bacteria"/>
</dbReference>
<dbReference type="HOGENOM" id="CLU_025427_0_2_9"/>
<dbReference type="OrthoDB" id="9808460at2"/>
<dbReference type="UniPathway" id="UPA00109">
    <property type="reaction ID" value="UER00185"/>
</dbReference>
<dbReference type="Proteomes" id="UP000001732">
    <property type="component" value="Chromosome"/>
</dbReference>
<dbReference type="GO" id="GO:0005829">
    <property type="term" value="C:cytosol"/>
    <property type="evidence" value="ECO:0007669"/>
    <property type="project" value="TreeGrafter"/>
</dbReference>
<dbReference type="GO" id="GO:0043531">
    <property type="term" value="F:ADP binding"/>
    <property type="evidence" value="ECO:0007669"/>
    <property type="project" value="TreeGrafter"/>
</dbReference>
<dbReference type="GO" id="GO:0005524">
    <property type="term" value="F:ATP binding"/>
    <property type="evidence" value="ECO:0007669"/>
    <property type="project" value="UniProtKB-KW"/>
</dbReference>
<dbReference type="GO" id="GO:0004618">
    <property type="term" value="F:phosphoglycerate kinase activity"/>
    <property type="evidence" value="ECO:0007669"/>
    <property type="project" value="UniProtKB-UniRule"/>
</dbReference>
<dbReference type="GO" id="GO:0006094">
    <property type="term" value="P:gluconeogenesis"/>
    <property type="evidence" value="ECO:0007669"/>
    <property type="project" value="TreeGrafter"/>
</dbReference>
<dbReference type="GO" id="GO:0006096">
    <property type="term" value="P:glycolytic process"/>
    <property type="evidence" value="ECO:0007669"/>
    <property type="project" value="UniProtKB-UniRule"/>
</dbReference>
<dbReference type="FunFam" id="3.40.50.1260:FF:000006">
    <property type="entry name" value="Phosphoglycerate kinase"/>
    <property type="match status" value="1"/>
</dbReference>
<dbReference type="FunFam" id="3.40.50.1260:FF:000031">
    <property type="entry name" value="Phosphoglycerate kinase 1"/>
    <property type="match status" value="1"/>
</dbReference>
<dbReference type="Gene3D" id="3.40.50.1260">
    <property type="entry name" value="Phosphoglycerate kinase, N-terminal domain"/>
    <property type="match status" value="2"/>
</dbReference>
<dbReference type="HAMAP" id="MF_00145">
    <property type="entry name" value="Phosphoglyc_kinase"/>
    <property type="match status" value="1"/>
</dbReference>
<dbReference type="InterPro" id="IPR001576">
    <property type="entry name" value="Phosphoglycerate_kinase"/>
</dbReference>
<dbReference type="InterPro" id="IPR015911">
    <property type="entry name" value="Phosphoglycerate_kinase_CS"/>
</dbReference>
<dbReference type="InterPro" id="IPR015824">
    <property type="entry name" value="Phosphoglycerate_kinase_N"/>
</dbReference>
<dbReference type="InterPro" id="IPR036043">
    <property type="entry name" value="Phosphoglycerate_kinase_sf"/>
</dbReference>
<dbReference type="PANTHER" id="PTHR11406">
    <property type="entry name" value="PHOSPHOGLYCERATE KINASE"/>
    <property type="match status" value="1"/>
</dbReference>
<dbReference type="PANTHER" id="PTHR11406:SF23">
    <property type="entry name" value="PHOSPHOGLYCERATE KINASE 1, CHLOROPLASTIC-RELATED"/>
    <property type="match status" value="1"/>
</dbReference>
<dbReference type="Pfam" id="PF00162">
    <property type="entry name" value="PGK"/>
    <property type="match status" value="1"/>
</dbReference>
<dbReference type="PIRSF" id="PIRSF000724">
    <property type="entry name" value="Pgk"/>
    <property type="match status" value="1"/>
</dbReference>
<dbReference type="PRINTS" id="PR00477">
    <property type="entry name" value="PHGLYCKINASE"/>
</dbReference>
<dbReference type="SUPFAM" id="SSF53748">
    <property type="entry name" value="Phosphoglycerate kinase"/>
    <property type="match status" value="1"/>
</dbReference>
<dbReference type="PROSITE" id="PS00111">
    <property type="entry name" value="PGLYCERATE_KINASE"/>
    <property type="match status" value="1"/>
</dbReference>
<organism>
    <name type="scientific">Coprothermobacter proteolyticus (strain ATCC 35245 / DSM 5265 / OCM 4 / BT)</name>
    <dbReference type="NCBI Taxonomy" id="309798"/>
    <lineage>
        <taxon>Bacteria</taxon>
        <taxon>Pseudomonadati</taxon>
        <taxon>Coprothermobacterota</taxon>
        <taxon>Coprothermobacteria</taxon>
        <taxon>Coprothermobacterales</taxon>
        <taxon>Coprothermobacteraceae</taxon>
        <taxon>Coprothermobacter</taxon>
    </lineage>
</organism>
<keyword id="KW-0067">ATP-binding</keyword>
<keyword id="KW-0963">Cytoplasm</keyword>
<keyword id="KW-0324">Glycolysis</keyword>
<keyword id="KW-0418">Kinase</keyword>
<keyword id="KW-0547">Nucleotide-binding</keyword>
<keyword id="KW-1185">Reference proteome</keyword>
<keyword id="KW-0808">Transferase</keyword>
<reference key="1">
    <citation type="submission" date="2008-08" db="EMBL/GenBank/DDBJ databases">
        <title>The complete genome sequence of Coprothermobacter proteolyticus strain ATCC 5245 / DSM 5265 / BT.</title>
        <authorList>
            <person name="Dodson R.J."/>
            <person name="Durkin A.S."/>
            <person name="Wu M."/>
            <person name="Eisen J."/>
            <person name="Sutton G."/>
        </authorList>
    </citation>
    <scope>NUCLEOTIDE SEQUENCE [LARGE SCALE GENOMIC DNA]</scope>
    <source>
        <strain>ATCC 35245 / DSM 5265 / OCM 4 / BT</strain>
    </source>
</reference>
<proteinExistence type="inferred from homology"/>
<comment type="catalytic activity">
    <reaction evidence="1">
        <text>(2R)-3-phosphoglycerate + ATP = (2R)-3-phospho-glyceroyl phosphate + ADP</text>
        <dbReference type="Rhea" id="RHEA:14801"/>
        <dbReference type="ChEBI" id="CHEBI:30616"/>
        <dbReference type="ChEBI" id="CHEBI:57604"/>
        <dbReference type="ChEBI" id="CHEBI:58272"/>
        <dbReference type="ChEBI" id="CHEBI:456216"/>
        <dbReference type="EC" id="2.7.2.3"/>
    </reaction>
</comment>
<comment type="pathway">
    <text evidence="1">Carbohydrate degradation; glycolysis; pyruvate from D-glyceraldehyde 3-phosphate: step 2/5.</text>
</comment>
<comment type="subunit">
    <text evidence="1">Monomer.</text>
</comment>
<comment type="subcellular location">
    <subcellularLocation>
        <location evidence="1">Cytoplasm</location>
    </subcellularLocation>
</comment>
<comment type="similarity">
    <text evidence="1">Belongs to the phosphoglycerate kinase family.</text>
</comment>
<evidence type="ECO:0000255" key="1">
    <source>
        <dbReference type="HAMAP-Rule" id="MF_00145"/>
    </source>
</evidence>
<name>PGK_COPPD</name>
<protein>
    <recommendedName>
        <fullName evidence="1">Phosphoglycerate kinase</fullName>
        <ecNumber evidence="1">2.7.2.3</ecNumber>
    </recommendedName>
</protein>
<feature type="chain" id="PRO_1000096334" description="Phosphoglycerate kinase">
    <location>
        <begin position="1"/>
        <end position="393"/>
    </location>
</feature>
<feature type="binding site" evidence="1">
    <location>
        <begin position="21"/>
        <end position="23"/>
    </location>
    <ligand>
        <name>substrate</name>
    </ligand>
</feature>
<feature type="binding site" evidence="1">
    <location>
        <position position="37"/>
    </location>
    <ligand>
        <name>substrate</name>
    </ligand>
</feature>
<feature type="binding site" evidence="1">
    <location>
        <begin position="60"/>
        <end position="63"/>
    </location>
    <ligand>
        <name>substrate</name>
    </ligand>
</feature>
<feature type="binding site" evidence="1">
    <location>
        <position position="119"/>
    </location>
    <ligand>
        <name>substrate</name>
    </ligand>
</feature>
<feature type="binding site" evidence="1">
    <location>
        <position position="152"/>
    </location>
    <ligand>
        <name>substrate</name>
    </ligand>
</feature>
<feature type="binding site" evidence="1">
    <location>
        <position position="202"/>
    </location>
    <ligand>
        <name>ATP</name>
        <dbReference type="ChEBI" id="CHEBI:30616"/>
    </ligand>
</feature>
<feature type="binding site" evidence="1">
    <location>
        <position position="291"/>
    </location>
    <ligand>
        <name>ATP</name>
        <dbReference type="ChEBI" id="CHEBI:30616"/>
    </ligand>
</feature>
<feature type="binding site" evidence="1">
    <location>
        <position position="322"/>
    </location>
    <ligand>
        <name>ATP</name>
        <dbReference type="ChEBI" id="CHEBI:30616"/>
    </ligand>
</feature>
<feature type="binding site" evidence="1">
    <location>
        <begin position="348"/>
        <end position="351"/>
    </location>
    <ligand>
        <name>ATP</name>
        <dbReference type="ChEBI" id="CHEBI:30616"/>
    </ligand>
</feature>
<sequence>MKLRSIRDAEVRNKRVIVRVDFNVPLDAEGNVVDDFRIRAALPTIEYLVENGAKVILISHLGRPKGKRDKKYSLVGVAKRLAELLHKEILFAPDVVGEEVELAVNGLRSGDILLCENVRFHEEEEKNDAEFAKNIASLGEIFVNDAFSASHRAHATVEGITKFLPSYAGFLMEKEVNYLSMLTENPQRPYYLVLGGAKVSDKVALLQNLLPKVDGMVIGGAMVFTFWKAQGKEIGKSIVEDDLVGFAKELLEQATTQNKEIVLAKDFVVADENKEHVEIKAISDFGPADIGYDIGPESIKEFKNALVKARTVFWNGPLGLFEDAKFAEGTKQVGAFLADFPGTVVVGGGDTANAVREMELFEKFAHVSTGGGASLEFLEGKVLPGIAPLVVEG</sequence>